<sequence length="391" mass="42245">MIGTPYTEGARRAMLLGCGELGKEVAIELQRLGVEVIGVDRYPNAPAMQIAHRSHVINMLDAKALRAIIELEKPHLVIPEIEAIATQTLVEMEAEGLNVVPTARATQLTMDREGIRRLAAETLGLPTSPYFFCDTETEFNQAIGKIGVPCVVKPVMSSSGKGQSVIRDVSQSAKAWQYAQEGGRAGGGRVIVEGFIPFDYEITLLTISAVNGIHFCAPIGHRQEDGDYRESWQPQAMSADVLAKSQAIASKVVEALGGYGLFGVELFVKGNDVYFSEVSPRPHDTGLVTLISQDLSEFALHVRAILGLPIPNIHQHGPSASAVVLVEGKSKNIRYQGLADALAAENTQLRLFAKPEIDGRRRLGVALARDKDIESAVNKALDSASKVKVIF</sequence>
<comment type="function">
    <text evidence="1">Involved in the de novo purine biosynthesis. Catalyzes the transfer of formate to 5-phospho-ribosyl-glycinamide (GAR), producing 5-phospho-ribosyl-N-formylglycinamide (FGAR). Formate is provided by PurU via hydrolysis of 10-formyl-tetrahydrofolate.</text>
</comment>
<comment type="catalytic activity">
    <reaction evidence="1">
        <text>N(1)-(5-phospho-beta-D-ribosyl)glycinamide + formate + ATP = N(2)-formyl-N(1)-(5-phospho-beta-D-ribosyl)glycinamide + ADP + phosphate + H(+)</text>
        <dbReference type="Rhea" id="RHEA:24829"/>
        <dbReference type="ChEBI" id="CHEBI:15378"/>
        <dbReference type="ChEBI" id="CHEBI:15740"/>
        <dbReference type="ChEBI" id="CHEBI:30616"/>
        <dbReference type="ChEBI" id="CHEBI:43474"/>
        <dbReference type="ChEBI" id="CHEBI:143788"/>
        <dbReference type="ChEBI" id="CHEBI:147286"/>
        <dbReference type="ChEBI" id="CHEBI:456216"/>
        <dbReference type="EC" id="6.3.1.21"/>
    </reaction>
    <physiologicalReaction direction="left-to-right" evidence="1">
        <dbReference type="Rhea" id="RHEA:24830"/>
    </physiologicalReaction>
</comment>
<comment type="pathway">
    <text evidence="1">Purine metabolism; IMP biosynthesis via de novo pathway; N(2)-formyl-N(1)-(5-phospho-D-ribosyl)glycinamide from N(1)-(5-phospho-D-ribosyl)glycinamide (formate route): step 1/1.</text>
</comment>
<comment type="subunit">
    <text evidence="1">Homodimer.</text>
</comment>
<comment type="similarity">
    <text evidence="1">Belongs to the PurK/PurT family.</text>
</comment>
<protein>
    <recommendedName>
        <fullName evidence="1">Formate-dependent phosphoribosylglycinamide formyltransferase</fullName>
        <ecNumber evidence="1">6.3.1.21</ecNumber>
    </recommendedName>
    <alternativeName>
        <fullName evidence="1">5'-phosphoribosylglycinamide transformylase 2</fullName>
    </alternativeName>
    <alternativeName>
        <fullName evidence="1">Formate-dependent GAR transformylase</fullName>
    </alternativeName>
    <alternativeName>
        <fullName evidence="1">GAR transformylase 2</fullName>
        <shortName evidence="1">GART 2</shortName>
    </alternativeName>
    <alternativeName>
        <fullName evidence="1">Non-folate glycinamide ribonucleotide transformylase</fullName>
    </alternativeName>
    <alternativeName>
        <fullName evidence="1">Phosphoribosylglycinamide formyltransferase 2</fullName>
    </alternativeName>
</protein>
<feature type="chain" id="PRO_0000319236" description="Formate-dependent phosphoribosylglycinamide formyltransferase">
    <location>
        <begin position="1"/>
        <end position="391"/>
    </location>
</feature>
<feature type="domain" description="ATP-grasp" evidence="1">
    <location>
        <begin position="117"/>
        <end position="306"/>
    </location>
</feature>
<feature type="binding site" evidence="1">
    <location>
        <begin position="20"/>
        <end position="21"/>
    </location>
    <ligand>
        <name>N(1)-(5-phospho-beta-D-ribosyl)glycinamide</name>
        <dbReference type="ChEBI" id="CHEBI:143788"/>
    </ligand>
</feature>
<feature type="binding site" evidence="1">
    <location>
        <position position="80"/>
    </location>
    <ligand>
        <name>N(1)-(5-phospho-beta-D-ribosyl)glycinamide</name>
        <dbReference type="ChEBI" id="CHEBI:143788"/>
    </ligand>
</feature>
<feature type="binding site" evidence="1">
    <location>
        <position position="112"/>
    </location>
    <ligand>
        <name>ATP</name>
        <dbReference type="ChEBI" id="CHEBI:30616"/>
    </ligand>
</feature>
<feature type="binding site" evidence="1">
    <location>
        <position position="153"/>
    </location>
    <ligand>
        <name>ATP</name>
        <dbReference type="ChEBI" id="CHEBI:30616"/>
    </ligand>
</feature>
<feature type="binding site" evidence="1">
    <location>
        <begin position="158"/>
        <end position="163"/>
    </location>
    <ligand>
        <name>ATP</name>
        <dbReference type="ChEBI" id="CHEBI:30616"/>
    </ligand>
</feature>
<feature type="binding site" evidence="1">
    <location>
        <begin position="193"/>
        <end position="196"/>
    </location>
    <ligand>
        <name>ATP</name>
        <dbReference type="ChEBI" id="CHEBI:30616"/>
    </ligand>
</feature>
<feature type="binding site" evidence="1">
    <location>
        <position position="201"/>
    </location>
    <ligand>
        <name>ATP</name>
        <dbReference type="ChEBI" id="CHEBI:30616"/>
    </ligand>
</feature>
<feature type="binding site" evidence="1">
    <location>
        <position position="265"/>
    </location>
    <ligand>
        <name>Mg(2+)</name>
        <dbReference type="ChEBI" id="CHEBI:18420"/>
    </ligand>
</feature>
<feature type="binding site" evidence="1">
    <location>
        <position position="277"/>
    </location>
    <ligand>
        <name>Mg(2+)</name>
        <dbReference type="ChEBI" id="CHEBI:18420"/>
    </ligand>
</feature>
<feature type="binding site" evidence="1">
    <location>
        <position position="284"/>
    </location>
    <ligand>
        <name>N(1)-(5-phospho-beta-D-ribosyl)glycinamide</name>
        <dbReference type="ChEBI" id="CHEBI:143788"/>
    </ligand>
</feature>
<feature type="binding site" evidence="1">
    <location>
        <position position="354"/>
    </location>
    <ligand>
        <name>N(1)-(5-phospho-beta-D-ribosyl)glycinamide</name>
        <dbReference type="ChEBI" id="CHEBI:143788"/>
    </ligand>
</feature>
<feature type="binding site" evidence="1">
    <location>
        <begin position="361"/>
        <end position="362"/>
    </location>
    <ligand>
        <name>N(1)-(5-phospho-beta-D-ribosyl)glycinamide</name>
        <dbReference type="ChEBI" id="CHEBI:143788"/>
    </ligand>
</feature>
<organism>
    <name type="scientific">Shewanella sp. (strain MR-7)</name>
    <dbReference type="NCBI Taxonomy" id="60481"/>
    <lineage>
        <taxon>Bacteria</taxon>
        <taxon>Pseudomonadati</taxon>
        <taxon>Pseudomonadota</taxon>
        <taxon>Gammaproteobacteria</taxon>
        <taxon>Alteromonadales</taxon>
        <taxon>Shewanellaceae</taxon>
        <taxon>Shewanella</taxon>
    </lineage>
</organism>
<gene>
    <name evidence="1" type="primary">purT</name>
    <name type="ordered locus">Shewmr7_3101</name>
</gene>
<dbReference type="EC" id="6.3.1.21" evidence="1"/>
<dbReference type="EMBL" id="CP000444">
    <property type="protein sequence ID" value="ABI44085.1"/>
    <property type="molecule type" value="Genomic_DNA"/>
</dbReference>
<dbReference type="SMR" id="Q0HS20"/>
<dbReference type="KEGG" id="shm:Shewmr7_3101"/>
<dbReference type="HOGENOM" id="CLU_011534_1_3_6"/>
<dbReference type="UniPathway" id="UPA00074">
    <property type="reaction ID" value="UER00127"/>
</dbReference>
<dbReference type="GO" id="GO:0005829">
    <property type="term" value="C:cytosol"/>
    <property type="evidence" value="ECO:0007669"/>
    <property type="project" value="TreeGrafter"/>
</dbReference>
<dbReference type="GO" id="GO:0005524">
    <property type="term" value="F:ATP binding"/>
    <property type="evidence" value="ECO:0007669"/>
    <property type="project" value="UniProtKB-UniRule"/>
</dbReference>
<dbReference type="GO" id="GO:0000287">
    <property type="term" value="F:magnesium ion binding"/>
    <property type="evidence" value="ECO:0007669"/>
    <property type="project" value="InterPro"/>
</dbReference>
<dbReference type="GO" id="GO:0043815">
    <property type="term" value="F:phosphoribosylglycinamide formyltransferase 2 activity"/>
    <property type="evidence" value="ECO:0007669"/>
    <property type="project" value="UniProtKB-UniRule"/>
</dbReference>
<dbReference type="GO" id="GO:0004644">
    <property type="term" value="F:phosphoribosylglycinamide formyltransferase activity"/>
    <property type="evidence" value="ECO:0007669"/>
    <property type="project" value="InterPro"/>
</dbReference>
<dbReference type="GO" id="GO:0006189">
    <property type="term" value="P:'de novo' IMP biosynthetic process"/>
    <property type="evidence" value="ECO:0007669"/>
    <property type="project" value="UniProtKB-UniRule"/>
</dbReference>
<dbReference type="FunFam" id="3.30.1490.20:FF:000013">
    <property type="entry name" value="Formate-dependent phosphoribosylglycinamide formyltransferase"/>
    <property type="match status" value="1"/>
</dbReference>
<dbReference type="FunFam" id="3.30.470.20:FF:000027">
    <property type="entry name" value="Formate-dependent phosphoribosylglycinamide formyltransferase"/>
    <property type="match status" value="1"/>
</dbReference>
<dbReference type="FunFam" id="3.40.50.20:FF:000007">
    <property type="entry name" value="Formate-dependent phosphoribosylglycinamide formyltransferase"/>
    <property type="match status" value="1"/>
</dbReference>
<dbReference type="Gene3D" id="3.40.50.20">
    <property type="match status" value="1"/>
</dbReference>
<dbReference type="Gene3D" id="3.30.1490.20">
    <property type="entry name" value="ATP-grasp fold, A domain"/>
    <property type="match status" value="1"/>
</dbReference>
<dbReference type="Gene3D" id="3.30.470.20">
    <property type="entry name" value="ATP-grasp fold, B domain"/>
    <property type="match status" value="1"/>
</dbReference>
<dbReference type="HAMAP" id="MF_01643">
    <property type="entry name" value="PurT"/>
    <property type="match status" value="1"/>
</dbReference>
<dbReference type="InterPro" id="IPR011761">
    <property type="entry name" value="ATP-grasp"/>
</dbReference>
<dbReference type="InterPro" id="IPR003135">
    <property type="entry name" value="ATP-grasp_carboxylate-amine"/>
</dbReference>
<dbReference type="InterPro" id="IPR013815">
    <property type="entry name" value="ATP_grasp_subdomain_1"/>
</dbReference>
<dbReference type="InterPro" id="IPR016185">
    <property type="entry name" value="PreATP-grasp_dom_sf"/>
</dbReference>
<dbReference type="InterPro" id="IPR005862">
    <property type="entry name" value="PurT"/>
</dbReference>
<dbReference type="InterPro" id="IPR054350">
    <property type="entry name" value="PurT/PurK_preATP-grasp"/>
</dbReference>
<dbReference type="InterPro" id="IPR048740">
    <property type="entry name" value="PurT_C"/>
</dbReference>
<dbReference type="InterPro" id="IPR011054">
    <property type="entry name" value="Rudment_hybrid_motif"/>
</dbReference>
<dbReference type="NCBIfam" id="NF006766">
    <property type="entry name" value="PRK09288.1"/>
    <property type="match status" value="1"/>
</dbReference>
<dbReference type="NCBIfam" id="TIGR01142">
    <property type="entry name" value="purT"/>
    <property type="match status" value="1"/>
</dbReference>
<dbReference type="PANTHER" id="PTHR43055">
    <property type="entry name" value="FORMATE-DEPENDENT PHOSPHORIBOSYLGLYCINAMIDE FORMYLTRANSFERASE"/>
    <property type="match status" value="1"/>
</dbReference>
<dbReference type="PANTHER" id="PTHR43055:SF1">
    <property type="entry name" value="FORMATE-DEPENDENT PHOSPHORIBOSYLGLYCINAMIDE FORMYLTRANSFERASE"/>
    <property type="match status" value="1"/>
</dbReference>
<dbReference type="Pfam" id="PF02222">
    <property type="entry name" value="ATP-grasp"/>
    <property type="match status" value="1"/>
</dbReference>
<dbReference type="Pfam" id="PF21244">
    <property type="entry name" value="PurT_C"/>
    <property type="match status" value="1"/>
</dbReference>
<dbReference type="Pfam" id="PF22660">
    <property type="entry name" value="RS_preATP-grasp-like"/>
    <property type="match status" value="1"/>
</dbReference>
<dbReference type="SUPFAM" id="SSF56059">
    <property type="entry name" value="Glutathione synthetase ATP-binding domain-like"/>
    <property type="match status" value="1"/>
</dbReference>
<dbReference type="SUPFAM" id="SSF52440">
    <property type="entry name" value="PreATP-grasp domain"/>
    <property type="match status" value="1"/>
</dbReference>
<dbReference type="SUPFAM" id="SSF51246">
    <property type="entry name" value="Rudiment single hybrid motif"/>
    <property type="match status" value="1"/>
</dbReference>
<dbReference type="PROSITE" id="PS50975">
    <property type="entry name" value="ATP_GRASP"/>
    <property type="match status" value="1"/>
</dbReference>
<reference key="1">
    <citation type="submission" date="2006-08" db="EMBL/GenBank/DDBJ databases">
        <title>Complete sequence of chromosome 1 of Shewanella sp. MR-7.</title>
        <authorList>
            <person name="Copeland A."/>
            <person name="Lucas S."/>
            <person name="Lapidus A."/>
            <person name="Barry K."/>
            <person name="Detter J.C."/>
            <person name="Glavina del Rio T."/>
            <person name="Hammon N."/>
            <person name="Israni S."/>
            <person name="Dalin E."/>
            <person name="Tice H."/>
            <person name="Pitluck S."/>
            <person name="Kiss H."/>
            <person name="Brettin T."/>
            <person name="Bruce D."/>
            <person name="Han C."/>
            <person name="Tapia R."/>
            <person name="Gilna P."/>
            <person name="Schmutz J."/>
            <person name="Larimer F."/>
            <person name="Land M."/>
            <person name="Hauser L."/>
            <person name="Kyrpides N."/>
            <person name="Mikhailova N."/>
            <person name="Nealson K."/>
            <person name="Konstantinidis K."/>
            <person name="Klappenbach J."/>
            <person name="Tiedje J."/>
            <person name="Richardson P."/>
        </authorList>
    </citation>
    <scope>NUCLEOTIDE SEQUENCE [LARGE SCALE GENOMIC DNA]</scope>
    <source>
        <strain>MR-7</strain>
    </source>
</reference>
<name>PURT_SHESR</name>
<accession>Q0HS20</accession>
<evidence type="ECO:0000255" key="1">
    <source>
        <dbReference type="HAMAP-Rule" id="MF_01643"/>
    </source>
</evidence>
<keyword id="KW-0067">ATP-binding</keyword>
<keyword id="KW-0436">Ligase</keyword>
<keyword id="KW-0460">Magnesium</keyword>
<keyword id="KW-0479">Metal-binding</keyword>
<keyword id="KW-0547">Nucleotide-binding</keyword>
<keyword id="KW-0658">Purine biosynthesis</keyword>
<proteinExistence type="inferred from homology"/>